<gene>
    <name evidence="1" type="primary">argH</name>
    <name type="ordered locus">Sde_3670</name>
</gene>
<sequence length="469" mass="52245">MTMSQEENPVKPWGGRFSEPTDAFVERFTASVTFDQRLYHHDINGSIAHATMLASVGVLSEDEKTAIIDGLEAIRSDIVEGKFDWSISLEDVHMNIEAELTKRIGITGKKLHTGRSRNDQVATDIRLYLRDEIDNIAKELTRLQSGILDLAEREADTIMPGFTHLQTAQPVTFGHHLMAWYEMMTRDYTRLMDCRERLNQSPLGAAALAGTTYPIDREQTAALLGFNHPTRNSLDSVSDRDFAIEFSAFAAILMTHLSRASEELVLWASAQFNFINLPDRFCTGSSIMPQKKNPDVPELVRGKTGRVNGHLISLLTLMKSQPLAYNKDNQEDKEPLFDAIDTVKDCLRAFADMVPAIESKKESMYEAAKRGFSTATDLADYLVRKGIPFRDSHEVVGKAVGYGVETGKDLSEMTLEELQGFSKEIQQDVFDVLTLEGSVAARNHIGGTAPAQVRIAVENAKQELEGRNS</sequence>
<dbReference type="EC" id="4.3.2.1" evidence="1"/>
<dbReference type="EMBL" id="CP000282">
    <property type="protein sequence ID" value="ABD82925.1"/>
    <property type="molecule type" value="Genomic_DNA"/>
</dbReference>
<dbReference type="SMR" id="Q21EF4"/>
<dbReference type="STRING" id="203122.Sde_3670"/>
<dbReference type="KEGG" id="sde:Sde_3670"/>
<dbReference type="eggNOG" id="COG0165">
    <property type="taxonomic scope" value="Bacteria"/>
</dbReference>
<dbReference type="HOGENOM" id="CLU_027272_2_3_6"/>
<dbReference type="UniPathway" id="UPA00068">
    <property type="reaction ID" value="UER00114"/>
</dbReference>
<dbReference type="Proteomes" id="UP000001947">
    <property type="component" value="Chromosome"/>
</dbReference>
<dbReference type="GO" id="GO:0005829">
    <property type="term" value="C:cytosol"/>
    <property type="evidence" value="ECO:0007669"/>
    <property type="project" value="TreeGrafter"/>
</dbReference>
<dbReference type="GO" id="GO:0004056">
    <property type="term" value="F:argininosuccinate lyase activity"/>
    <property type="evidence" value="ECO:0007669"/>
    <property type="project" value="UniProtKB-UniRule"/>
</dbReference>
<dbReference type="GO" id="GO:0042450">
    <property type="term" value="P:arginine biosynthetic process via ornithine"/>
    <property type="evidence" value="ECO:0007669"/>
    <property type="project" value="InterPro"/>
</dbReference>
<dbReference type="GO" id="GO:0006526">
    <property type="term" value="P:L-arginine biosynthetic process"/>
    <property type="evidence" value="ECO:0007669"/>
    <property type="project" value="UniProtKB-UniRule"/>
</dbReference>
<dbReference type="CDD" id="cd01359">
    <property type="entry name" value="Argininosuccinate_lyase"/>
    <property type="match status" value="1"/>
</dbReference>
<dbReference type="FunFam" id="1.10.275.10:FF:000002">
    <property type="entry name" value="Argininosuccinate lyase"/>
    <property type="match status" value="1"/>
</dbReference>
<dbReference type="FunFam" id="1.10.40.30:FF:000001">
    <property type="entry name" value="Argininosuccinate lyase"/>
    <property type="match status" value="1"/>
</dbReference>
<dbReference type="FunFam" id="1.20.200.10:FF:000015">
    <property type="entry name" value="argininosuccinate lyase isoform X2"/>
    <property type="match status" value="1"/>
</dbReference>
<dbReference type="Gene3D" id="1.10.40.30">
    <property type="entry name" value="Fumarase/aspartase (C-terminal domain)"/>
    <property type="match status" value="1"/>
</dbReference>
<dbReference type="Gene3D" id="1.20.200.10">
    <property type="entry name" value="Fumarase/aspartase (Central domain)"/>
    <property type="match status" value="1"/>
</dbReference>
<dbReference type="Gene3D" id="1.10.275.10">
    <property type="entry name" value="Fumarase/aspartase (N-terminal domain)"/>
    <property type="match status" value="1"/>
</dbReference>
<dbReference type="HAMAP" id="MF_00006">
    <property type="entry name" value="Arg_succ_lyase"/>
    <property type="match status" value="1"/>
</dbReference>
<dbReference type="InterPro" id="IPR029419">
    <property type="entry name" value="Arg_succ_lyase_C"/>
</dbReference>
<dbReference type="InterPro" id="IPR009049">
    <property type="entry name" value="Argininosuccinate_lyase"/>
</dbReference>
<dbReference type="InterPro" id="IPR024083">
    <property type="entry name" value="Fumarase/histidase_N"/>
</dbReference>
<dbReference type="InterPro" id="IPR020557">
    <property type="entry name" value="Fumarate_lyase_CS"/>
</dbReference>
<dbReference type="InterPro" id="IPR000362">
    <property type="entry name" value="Fumarate_lyase_fam"/>
</dbReference>
<dbReference type="InterPro" id="IPR022761">
    <property type="entry name" value="Fumarate_lyase_N"/>
</dbReference>
<dbReference type="InterPro" id="IPR008948">
    <property type="entry name" value="L-Aspartase-like"/>
</dbReference>
<dbReference type="NCBIfam" id="TIGR00838">
    <property type="entry name" value="argH"/>
    <property type="match status" value="1"/>
</dbReference>
<dbReference type="PANTHER" id="PTHR43814">
    <property type="entry name" value="ARGININOSUCCINATE LYASE"/>
    <property type="match status" value="1"/>
</dbReference>
<dbReference type="PANTHER" id="PTHR43814:SF1">
    <property type="entry name" value="ARGININOSUCCINATE LYASE"/>
    <property type="match status" value="1"/>
</dbReference>
<dbReference type="Pfam" id="PF14698">
    <property type="entry name" value="ASL_C2"/>
    <property type="match status" value="1"/>
</dbReference>
<dbReference type="Pfam" id="PF00206">
    <property type="entry name" value="Lyase_1"/>
    <property type="match status" value="1"/>
</dbReference>
<dbReference type="PRINTS" id="PR00145">
    <property type="entry name" value="ARGSUCLYASE"/>
</dbReference>
<dbReference type="PRINTS" id="PR00149">
    <property type="entry name" value="FUMRATELYASE"/>
</dbReference>
<dbReference type="SUPFAM" id="SSF48557">
    <property type="entry name" value="L-aspartase-like"/>
    <property type="match status" value="1"/>
</dbReference>
<dbReference type="PROSITE" id="PS00163">
    <property type="entry name" value="FUMARATE_LYASES"/>
    <property type="match status" value="1"/>
</dbReference>
<organism>
    <name type="scientific">Saccharophagus degradans (strain 2-40 / ATCC 43961 / DSM 17024)</name>
    <dbReference type="NCBI Taxonomy" id="203122"/>
    <lineage>
        <taxon>Bacteria</taxon>
        <taxon>Pseudomonadati</taxon>
        <taxon>Pseudomonadota</taxon>
        <taxon>Gammaproteobacteria</taxon>
        <taxon>Cellvibrionales</taxon>
        <taxon>Cellvibrionaceae</taxon>
        <taxon>Saccharophagus</taxon>
    </lineage>
</organism>
<feature type="chain" id="PRO_0000240765" description="Argininosuccinate lyase">
    <location>
        <begin position="1"/>
        <end position="469"/>
    </location>
</feature>
<reference key="1">
    <citation type="journal article" date="2008" name="PLoS Genet.">
        <title>Complete genome sequence of the complex carbohydrate-degrading marine bacterium, Saccharophagus degradans strain 2-40 T.</title>
        <authorList>
            <person name="Weiner R.M."/>
            <person name="Taylor L.E. II"/>
            <person name="Henrissat B."/>
            <person name="Hauser L."/>
            <person name="Land M."/>
            <person name="Coutinho P.M."/>
            <person name="Rancurel C."/>
            <person name="Saunders E.H."/>
            <person name="Longmire A.G."/>
            <person name="Zhang H."/>
            <person name="Bayer E.A."/>
            <person name="Gilbert H.J."/>
            <person name="Larimer F."/>
            <person name="Zhulin I.B."/>
            <person name="Ekborg N.A."/>
            <person name="Lamed R."/>
            <person name="Richardson P.M."/>
            <person name="Borovok I."/>
            <person name="Hutcheson S."/>
        </authorList>
    </citation>
    <scope>NUCLEOTIDE SEQUENCE [LARGE SCALE GENOMIC DNA]</scope>
    <source>
        <strain>2-40 / ATCC 43961 / DSM 17024</strain>
    </source>
</reference>
<name>ARLY_SACD2</name>
<accession>Q21EF4</accession>
<keyword id="KW-0028">Amino-acid biosynthesis</keyword>
<keyword id="KW-0055">Arginine biosynthesis</keyword>
<keyword id="KW-0963">Cytoplasm</keyword>
<keyword id="KW-0456">Lyase</keyword>
<keyword id="KW-1185">Reference proteome</keyword>
<protein>
    <recommendedName>
        <fullName evidence="1">Argininosuccinate lyase</fullName>
        <shortName evidence="1">ASAL</shortName>
        <ecNumber evidence="1">4.3.2.1</ecNumber>
    </recommendedName>
    <alternativeName>
        <fullName evidence="1">Arginosuccinase</fullName>
    </alternativeName>
</protein>
<comment type="catalytic activity">
    <reaction evidence="1">
        <text>2-(N(omega)-L-arginino)succinate = fumarate + L-arginine</text>
        <dbReference type="Rhea" id="RHEA:24020"/>
        <dbReference type="ChEBI" id="CHEBI:29806"/>
        <dbReference type="ChEBI" id="CHEBI:32682"/>
        <dbReference type="ChEBI" id="CHEBI:57472"/>
        <dbReference type="EC" id="4.3.2.1"/>
    </reaction>
</comment>
<comment type="pathway">
    <text evidence="1">Amino-acid biosynthesis; L-arginine biosynthesis; L-arginine from L-ornithine and carbamoyl phosphate: step 3/3.</text>
</comment>
<comment type="subcellular location">
    <subcellularLocation>
        <location evidence="1">Cytoplasm</location>
    </subcellularLocation>
</comment>
<comment type="similarity">
    <text evidence="1">Belongs to the lyase 1 family. Argininosuccinate lyase subfamily.</text>
</comment>
<evidence type="ECO:0000255" key="1">
    <source>
        <dbReference type="HAMAP-Rule" id="MF_00006"/>
    </source>
</evidence>
<proteinExistence type="inferred from homology"/>